<accession>Q6J844</accession>
<organism>
    <name type="scientific">Influenza A virus (strain A/Hong Kong/212/2003 H5N1 genotype Z+)</name>
    <dbReference type="NCBI Taxonomy" id="279794"/>
    <lineage>
        <taxon>Viruses</taxon>
        <taxon>Riboviria</taxon>
        <taxon>Orthornavirae</taxon>
        <taxon>Negarnaviricota</taxon>
        <taxon>Polyploviricotina</taxon>
        <taxon>Insthoviricetes</taxon>
        <taxon>Articulavirales</taxon>
        <taxon>Orthomyxoviridae</taxon>
        <taxon>Alphainfluenzavirus</taxon>
        <taxon>Alphainfluenzavirus influenzae</taxon>
        <taxon>Influenza A virus</taxon>
    </lineage>
</organism>
<comment type="function">
    <text evidence="1">Plays an essential role in viral RNA transcription and replication by forming the heterotrimeric polymerase complex together with PB1 and PB2 subunits. The complex transcribes viral mRNAs by using a unique mechanism called cap-snatching. It consists in the hijacking and cleavage of host capped pre-mRNAs. These short capped RNAs are then used as primers for viral mRNAs. The PB2 subunit is responsible for the binding of the 5' cap of cellular pre-mRNAs which are subsequently cleaved after 10-13 nucleotides by the PA subunit that carries the endonuclease activity.</text>
</comment>
<comment type="cofactor">
    <cofactor evidence="1">
        <name>Mn(2+)</name>
        <dbReference type="ChEBI" id="CHEBI:29035"/>
    </cofactor>
    <text evidence="1">Binds 2 manganese ions per subunit.</text>
</comment>
<comment type="subunit">
    <text evidence="1">Influenza RNA polymerase is composed of three subunits: PB1, PB2 and PA. Interacts (via C-terminus) with PB1 (via N-terminus).</text>
</comment>
<comment type="subcellular location">
    <subcellularLocation>
        <location evidence="1">Host cytoplasm</location>
    </subcellularLocation>
    <subcellularLocation>
        <location evidence="1">Host nucleus</location>
    </subcellularLocation>
    <text evidence="1">PB1 and PA are transported in the host nucleus as a complex.</text>
</comment>
<comment type="alternative products">
    <event type="ribosomal frameshifting"/>
    <isoform>
        <id>Q6J844-1</id>
        <name>PA</name>
        <sequence type="displayed"/>
    </isoform>
    <isoform>
        <id>Q6J844-2</id>
        <name>PA-X</name>
        <sequence type="not described"/>
    </isoform>
</comment>
<comment type="PTM">
    <text evidence="1">Phosphorylated on serines and threonines by host kinases, including human casein kinase II.</text>
</comment>
<comment type="similarity">
    <text evidence="1">Belongs to the influenza viruses PA family.</text>
</comment>
<dbReference type="EC" id="3.1.-.-" evidence="1"/>
<dbReference type="EMBL" id="AY576404">
    <property type="protein sequence ID" value="AAT39053.1"/>
    <property type="molecule type" value="Genomic_DNA"/>
</dbReference>
<dbReference type="SMR" id="Q6J844"/>
<dbReference type="GO" id="GO:0030430">
    <property type="term" value="C:host cell cytoplasm"/>
    <property type="evidence" value="ECO:0007669"/>
    <property type="project" value="UniProtKB-SubCell"/>
</dbReference>
<dbReference type="GO" id="GO:0042025">
    <property type="term" value="C:host cell nucleus"/>
    <property type="evidence" value="ECO:0007669"/>
    <property type="project" value="UniProtKB-SubCell"/>
</dbReference>
<dbReference type="GO" id="GO:0004519">
    <property type="term" value="F:endonuclease activity"/>
    <property type="evidence" value="ECO:0007669"/>
    <property type="project" value="UniProtKB-KW"/>
</dbReference>
<dbReference type="GO" id="GO:0046872">
    <property type="term" value="F:metal ion binding"/>
    <property type="evidence" value="ECO:0007669"/>
    <property type="project" value="UniProtKB-KW"/>
</dbReference>
<dbReference type="GO" id="GO:0003723">
    <property type="term" value="F:RNA binding"/>
    <property type="evidence" value="ECO:0007669"/>
    <property type="project" value="InterPro"/>
</dbReference>
<dbReference type="GO" id="GO:0075526">
    <property type="term" value="P:cap snatching"/>
    <property type="evidence" value="ECO:0007669"/>
    <property type="project" value="UniProtKB-KW"/>
</dbReference>
<dbReference type="GO" id="GO:0039657">
    <property type="term" value="P:symbiont-mediated suppression of host gene expression"/>
    <property type="evidence" value="ECO:0007669"/>
    <property type="project" value="UniProtKB-KW"/>
</dbReference>
<dbReference type="GO" id="GO:0039523">
    <property type="term" value="P:symbiont-mediated suppression of host mRNA transcription via inhibition of RNA polymerase II activity"/>
    <property type="evidence" value="ECO:0007669"/>
    <property type="project" value="UniProtKB-KW"/>
</dbReference>
<dbReference type="GO" id="GO:0039694">
    <property type="term" value="P:viral RNA genome replication"/>
    <property type="evidence" value="ECO:0007669"/>
    <property type="project" value="InterPro"/>
</dbReference>
<dbReference type="GO" id="GO:0075523">
    <property type="term" value="P:viral translational frameshifting"/>
    <property type="evidence" value="ECO:0007669"/>
    <property type="project" value="UniProtKB-KW"/>
</dbReference>
<dbReference type="FunFam" id="3.40.91.90:FF:000001">
    <property type="entry name" value="Polymerase acidic protein"/>
    <property type="match status" value="1"/>
</dbReference>
<dbReference type="Gene3D" id="3.40.91.90">
    <property type="entry name" value="Influenza RNA-dependent RNA polymerase subunit PA, endonuclease domain"/>
    <property type="match status" value="1"/>
</dbReference>
<dbReference type="HAMAP" id="MF_04063">
    <property type="entry name" value="INFV_PA"/>
    <property type="match status" value="1"/>
</dbReference>
<dbReference type="InterPro" id="IPR037534">
    <property type="entry name" value="INFV_PA"/>
</dbReference>
<dbReference type="InterPro" id="IPR001009">
    <property type="entry name" value="PA/PA-X"/>
</dbReference>
<dbReference type="InterPro" id="IPR038372">
    <property type="entry name" value="PA/PA-X_sf"/>
</dbReference>
<dbReference type="Pfam" id="PF00603">
    <property type="entry name" value="Flu_PA"/>
    <property type="match status" value="1"/>
</dbReference>
<keyword id="KW-1157">Cap snatching</keyword>
<keyword id="KW-0255">Endonuclease</keyword>
<keyword id="KW-1262">Eukaryotic host gene expression shutoff by virus</keyword>
<keyword id="KW-1191">Eukaryotic host transcription shutoff by virus</keyword>
<keyword id="KW-1035">Host cytoplasm</keyword>
<keyword id="KW-1190">Host gene expression shutoff by virus</keyword>
<keyword id="KW-1048">Host nucleus</keyword>
<keyword id="KW-0945">Host-virus interaction</keyword>
<keyword id="KW-0378">Hydrolase</keyword>
<keyword id="KW-1104">Inhibition of host RNA polymerase II by virus</keyword>
<keyword id="KW-0464">Manganese</keyword>
<keyword id="KW-0479">Metal-binding</keyword>
<keyword id="KW-0540">Nuclease</keyword>
<keyword id="KW-0597">Phosphoprotein</keyword>
<keyword id="KW-0688">Ribosomal frameshifting</keyword>
<gene>
    <name evidence="1" type="primary">PA</name>
</gene>
<reference key="1">
    <citation type="journal article" date="2004" name="Proc. Natl. Acad. Sci. U.S.A.">
        <title>H5N1 influenza: a protean pandemic threat.</title>
        <authorList>
            <person name="Guan Y."/>
            <person name="Poon L.L.M."/>
            <person name="Cheung C.Y."/>
            <person name="Ellis T.M."/>
            <person name="Lim W."/>
            <person name="Lipatov A.S."/>
            <person name="Chan K.H."/>
            <person name="Sturm-Ramirez K.M."/>
            <person name="Cheung C.L."/>
            <person name="Leung Y.H.C."/>
            <person name="Yuen K.Y."/>
            <person name="Webster R.G."/>
            <person name="Peiris J.S.M."/>
        </authorList>
    </citation>
    <scope>NUCLEOTIDE SEQUENCE [GENOMIC RNA]</scope>
</reference>
<evidence type="ECO:0000255" key="1">
    <source>
        <dbReference type="HAMAP-Rule" id="MF_04063"/>
    </source>
</evidence>
<protein>
    <recommendedName>
        <fullName evidence="1">Polymerase acidic protein</fullName>
        <ecNumber evidence="1">3.1.-.-</ecNumber>
    </recommendedName>
    <alternativeName>
        <fullName evidence="1">RNA-directed RNA polymerase subunit P2</fullName>
    </alternativeName>
</protein>
<name>PA_I03A0</name>
<feature type="chain" id="PRO_0000311140" description="Polymerase acidic protein">
    <location>
        <begin position="1" status="less than"/>
        <end position="712"/>
    </location>
</feature>
<feature type="short sequence motif" description="Nuclear localization signal 1 (NLS1)" evidence="1">
    <location>
        <begin position="120"/>
        <end position="135"/>
    </location>
</feature>
<feature type="short sequence motif" description="Nuclear localization signal 2 (NLS2)" evidence="1">
    <location>
        <begin position="180"/>
        <end position="243"/>
    </location>
</feature>
<feature type="binding site" evidence="1">
    <location>
        <position position="37"/>
    </location>
    <ligand>
        <name>Mn(2+)</name>
        <dbReference type="ChEBI" id="CHEBI:29035"/>
        <label>1</label>
    </ligand>
</feature>
<feature type="binding site" evidence="1">
    <location>
        <position position="76"/>
    </location>
    <ligand>
        <name>Mn(2+)</name>
        <dbReference type="ChEBI" id="CHEBI:29035"/>
        <label>2</label>
    </ligand>
</feature>
<feature type="binding site" evidence="1">
    <location>
        <position position="104"/>
    </location>
    <ligand>
        <name>Mn(2+)</name>
        <dbReference type="ChEBI" id="CHEBI:29035"/>
        <label>1</label>
    </ligand>
</feature>
<feature type="binding site" evidence="1">
    <location>
        <position position="104"/>
    </location>
    <ligand>
        <name>Mn(2+)</name>
        <dbReference type="ChEBI" id="CHEBI:29035"/>
        <label>2</label>
    </ligand>
</feature>
<feature type="binding site" evidence="1">
    <location>
        <position position="115"/>
    </location>
    <ligand>
        <name>Mn(2+)</name>
        <dbReference type="ChEBI" id="CHEBI:29035"/>
        <label>1</label>
    </ligand>
</feature>
<feature type="binding site" evidence="1">
    <location>
        <position position="116"/>
    </location>
    <ligand>
        <name>Mn(2+)</name>
        <dbReference type="ChEBI" id="CHEBI:29035"/>
        <label>1</label>
    </ligand>
</feature>
<feature type="non-terminal residue">
    <location>
        <position position="1"/>
    </location>
</feature>
<proteinExistence type="inferred from homology"/>
<organismHost>
    <name type="scientific">Aves</name>
    <dbReference type="NCBI Taxonomy" id="8782"/>
</organismHost>
<organismHost>
    <name type="scientific">Felis catus</name>
    <name type="common">Cat</name>
    <name type="synonym">Felis silvestris catus</name>
    <dbReference type="NCBI Taxonomy" id="9685"/>
</organismHost>
<organismHost>
    <name type="scientific">Homo sapiens</name>
    <name type="common">Human</name>
    <dbReference type="NCBI Taxonomy" id="9606"/>
</organismHost>
<organismHost>
    <name type="scientific">Panthera pardus</name>
    <name type="common">Leopard</name>
    <name type="synonym">Felis pardus</name>
    <dbReference type="NCBI Taxonomy" id="9691"/>
</organismHost>
<organismHost>
    <name type="scientific">Panthera tigris</name>
    <name type="common">Tiger</name>
    <dbReference type="NCBI Taxonomy" id="9694"/>
</organismHost>
<organismHost>
    <name type="scientific">Sus scrofa</name>
    <name type="common">Pig</name>
    <dbReference type="NCBI Taxonomy" id="9823"/>
</organismHost>
<sequence length="712" mass="81966">VRQCFNPMIVELAEKAMKEYGEDPKIETNKFAAICTHLEVCFMYSDFHFIDERSESIIVESGDPNALLKHRFEIIEGRDRTMAWTVVNSICNTTGVEKPKFLPDLYDYKENRFIEIGVTRREVHTYYLEKANKIKSEKTHIHIFSFTGEEMATKADYTLDEESRARIKTRLFTIRQEMASRGLWDSFRQSERGEETIEEKFEITGTMRRLADQSLPPNFSSLENFRTYVDGFEPNGCIEGKLSQMSKEVNARIEPFLKTTPRPLRLPDGPPCSQRSKFLLMDALKLSIEDPSHEGEGIPLYDAIKCMKTFFGWKEPNIVKPHEKGINPNYLLAWKQVLAELQDIENEEKIPKTKNMKKTSQLKWALGENMAPEKVDFEDCKDVSDLRQYDSDEPESRSLASWIQSEFNKACELTDSSWIELDEIGEDVAPIEHIASMRRNYFTAEVSHCRATEYIMKGVYINTALLNASCAAMDDFQLIPMISKCRTKEGRRKTNLYGFIIKGRSHLRNDTDVVNFVSMEFSLTDPRLEPHKWEKYCVLEIGDMLLRTAVGQVSRPMFLYVRTNGTSKIKMKWGMEMRRCLLQSLQQIESMIEAESSVKEKDMTKEFFENKSETWPIGESPKGVEEGSIGKVCRTLLAKSVFNSLYASPQLEGFSAESRKLLLIAQALRDNLEPGTFDLGGLYEAIEECLINDPWVLLNASWFNSFLAHALK</sequence>